<evidence type="ECO:0000255" key="1">
    <source>
        <dbReference type="HAMAP-Rule" id="MF_00178"/>
    </source>
</evidence>
<accession>B5R6R8</accession>
<gene>
    <name evidence="1" type="primary">ribH</name>
    <name type="ordered locus">SG0428</name>
</gene>
<protein>
    <recommendedName>
        <fullName evidence="1">6,7-dimethyl-8-ribityllumazine synthase</fullName>
        <shortName evidence="1">DMRL synthase</shortName>
        <shortName evidence="1">LS</shortName>
        <shortName evidence="1">Lumazine synthase</shortName>
        <ecNumber evidence="1">2.5.1.78</ecNumber>
    </recommendedName>
</protein>
<organism>
    <name type="scientific">Salmonella gallinarum (strain 287/91 / NCTC 13346)</name>
    <dbReference type="NCBI Taxonomy" id="550538"/>
    <lineage>
        <taxon>Bacteria</taxon>
        <taxon>Pseudomonadati</taxon>
        <taxon>Pseudomonadota</taxon>
        <taxon>Gammaproteobacteria</taxon>
        <taxon>Enterobacterales</taxon>
        <taxon>Enterobacteriaceae</taxon>
        <taxon>Salmonella</taxon>
    </lineage>
</organism>
<sequence>MNIIKANVAAPDARVAITIARFNQFINDSLLDGAVDALTRIGQVKDDNITVVWVPGAYELPLATEALAKSGKYDAVVALGTVIRGGTAHFEYVAGGASNGLASVAQDSGVPVAFGVLTTESIEQAIERAGTKAGNKGAEAALTALEMINVLKAIKA</sequence>
<reference key="1">
    <citation type="journal article" date="2008" name="Genome Res.">
        <title>Comparative genome analysis of Salmonella enteritidis PT4 and Salmonella gallinarum 287/91 provides insights into evolutionary and host adaptation pathways.</title>
        <authorList>
            <person name="Thomson N.R."/>
            <person name="Clayton D.J."/>
            <person name="Windhorst D."/>
            <person name="Vernikos G."/>
            <person name="Davidson S."/>
            <person name="Churcher C."/>
            <person name="Quail M.A."/>
            <person name="Stevens M."/>
            <person name="Jones M.A."/>
            <person name="Watson M."/>
            <person name="Barron A."/>
            <person name="Layton A."/>
            <person name="Pickard D."/>
            <person name="Kingsley R.A."/>
            <person name="Bignell A."/>
            <person name="Clark L."/>
            <person name="Harris B."/>
            <person name="Ormond D."/>
            <person name="Abdellah Z."/>
            <person name="Brooks K."/>
            <person name="Cherevach I."/>
            <person name="Chillingworth T."/>
            <person name="Woodward J."/>
            <person name="Norberczak H."/>
            <person name="Lord A."/>
            <person name="Arrowsmith C."/>
            <person name="Jagels K."/>
            <person name="Moule S."/>
            <person name="Mungall K."/>
            <person name="Saunders M."/>
            <person name="Whitehead S."/>
            <person name="Chabalgoity J.A."/>
            <person name="Maskell D."/>
            <person name="Humphreys T."/>
            <person name="Roberts M."/>
            <person name="Barrow P.A."/>
            <person name="Dougan G."/>
            <person name="Parkhill J."/>
        </authorList>
    </citation>
    <scope>NUCLEOTIDE SEQUENCE [LARGE SCALE GENOMIC DNA]</scope>
    <source>
        <strain>287/91 / NCTC 13346</strain>
    </source>
</reference>
<name>RISB_SALG2</name>
<comment type="function">
    <text evidence="1">Catalyzes the formation of 6,7-dimethyl-8-ribityllumazine by condensation of 5-amino-6-(D-ribitylamino)uracil with 3,4-dihydroxy-2-butanone 4-phosphate. This is the penultimate step in the biosynthesis of riboflavin.</text>
</comment>
<comment type="catalytic activity">
    <reaction evidence="1">
        <text>(2S)-2-hydroxy-3-oxobutyl phosphate + 5-amino-6-(D-ribitylamino)uracil = 6,7-dimethyl-8-(1-D-ribityl)lumazine + phosphate + 2 H2O + H(+)</text>
        <dbReference type="Rhea" id="RHEA:26152"/>
        <dbReference type="ChEBI" id="CHEBI:15377"/>
        <dbReference type="ChEBI" id="CHEBI:15378"/>
        <dbReference type="ChEBI" id="CHEBI:15934"/>
        <dbReference type="ChEBI" id="CHEBI:43474"/>
        <dbReference type="ChEBI" id="CHEBI:58201"/>
        <dbReference type="ChEBI" id="CHEBI:58830"/>
        <dbReference type="EC" id="2.5.1.78"/>
    </reaction>
</comment>
<comment type="pathway">
    <text evidence="1">Cofactor biosynthesis; riboflavin biosynthesis; riboflavin from 2-hydroxy-3-oxobutyl phosphate and 5-amino-6-(D-ribitylamino)uracil: step 1/2.</text>
</comment>
<comment type="subunit">
    <text evidence="1">Forms an icosahedral capsid composed of 60 subunits, arranged as a dodecamer of pentamers.</text>
</comment>
<comment type="similarity">
    <text evidence="1">Belongs to the DMRL synthase family.</text>
</comment>
<dbReference type="EC" id="2.5.1.78" evidence="1"/>
<dbReference type="EMBL" id="AM933173">
    <property type="protein sequence ID" value="CAR36327.1"/>
    <property type="molecule type" value="Genomic_DNA"/>
</dbReference>
<dbReference type="SMR" id="B5R6R8"/>
<dbReference type="KEGG" id="seg:SG0428"/>
<dbReference type="HOGENOM" id="CLU_089358_1_1_6"/>
<dbReference type="UniPathway" id="UPA00275">
    <property type="reaction ID" value="UER00404"/>
</dbReference>
<dbReference type="Proteomes" id="UP000008321">
    <property type="component" value="Chromosome"/>
</dbReference>
<dbReference type="GO" id="GO:0005829">
    <property type="term" value="C:cytosol"/>
    <property type="evidence" value="ECO:0007669"/>
    <property type="project" value="TreeGrafter"/>
</dbReference>
<dbReference type="GO" id="GO:0009349">
    <property type="term" value="C:riboflavin synthase complex"/>
    <property type="evidence" value="ECO:0007669"/>
    <property type="project" value="InterPro"/>
</dbReference>
<dbReference type="GO" id="GO:0000906">
    <property type="term" value="F:6,7-dimethyl-8-ribityllumazine synthase activity"/>
    <property type="evidence" value="ECO:0007669"/>
    <property type="project" value="UniProtKB-UniRule"/>
</dbReference>
<dbReference type="GO" id="GO:0009231">
    <property type="term" value="P:riboflavin biosynthetic process"/>
    <property type="evidence" value="ECO:0007669"/>
    <property type="project" value="UniProtKB-UniRule"/>
</dbReference>
<dbReference type="CDD" id="cd09209">
    <property type="entry name" value="Lumazine_synthase-I"/>
    <property type="match status" value="1"/>
</dbReference>
<dbReference type="FunFam" id="3.40.50.960:FF:000001">
    <property type="entry name" value="6,7-dimethyl-8-ribityllumazine synthase"/>
    <property type="match status" value="1"/>
</dbReference>
<dbReference type="Gene3D" id="3.40.50.960">
    <property type="entry name" value="Lumazine/riboflavin synthase"/>
    <property type="match status" value="1"/>
</dbReference>
<dbReference type="HAMAP" id="MF_00178">
    <property type="entry name" value="Lumazine_synth"/>
    <property type="match status" value="1"/>
</dbReference>
<dbReference type="InterPro" id="IPR034964">
    <property type="entry name" value="LS"/>
</dbReference>
<dbReference type="InterPro" id="IPR002180">
    <property type="entry name" value="LS/RS"/>
</dbReference>
<dbReference type="InterPro" id="IPR036467">
    <property type="entry name" value="LS/RS_sf"/>
</dbReference>
<dbReference type="NCBIfam" id="TIGR00114">
    <property type="entry name" value="lumazine-synth"/>
    <property type="match status" value="1"/>
</dbReference>
<dbReference type="NCBIfam" id="NF000812">
    <property type="entry name" value="PRK00061.1-4"/>
    <property type="match status" value="1"/>
</dbReference>
<dbReference type="PANTHER" id="PTHR21058:SF0">
    <property type="entry name" value="6,7-DIMETHYL-8-RIBITYLLUMAZINE SYNTHASE"/>
    <property type="match status" value="1"/>
</dbReference>
<dbReference type="PANTHER" id="PTHR21058">
    <property type="entry name" value="6,7-DIMETHYL-8-RIBITYLLUMAZINE SYNTHASE DMRL SYNTHASE LUMAZINE SYNTHASE"/>
    <property type="match status" value="1"/>
</dbReference>
<dbReference type="Pfam" id="PF00885">
    <property type="entry name" value="DMRL_synthase"/>
    <property type="match status" value="1"/>
</dbReference>
<dbReference type="SUPFAM" id="SSF52121">
    <property type="entry name" value="Lumazine synthase"/>
    <property type="match status" value="1"/>
</dbReference>
<keyword id="KW-0686">Riboflavin biosynthesis</keyword>
<keyword id="KW-0808">Transferase</keyword>
<feature type="chain" id="PRO_1000098224" description="6,7-dimethyl-8-ribityllumazine synthase">
    <location>
        <begin position="1"/>
        <end position="156"/>
    </location>
</feature>
<feature type="active site" description="Proton donor" evidence="1">
    <location>
        <position position="89"/>
    </location>
</feature>
<feature type="binding site" evidence="1">
    <location>
        <position position="22"/>
    </location>
    <ligand>
        <name>5-amino-6-(D-ribitylamino)uracil</name>
        <dbReference type="ChEBI" id="CHEBI:15934"/>
    </ligand>
</feature>
<feature type="binding site" evidence="1">
    <location>
        <begin position="57"/>
        <end position="59"/>
    </location>
    <ligand>
        <name>5-amino-6-(D-ribitylamino)uracil</name>
        <dbReference type="ChEBI" id="CHEBI:15934"/>
    </ligand>
</feature>
<feature type="binding site" evidence="1">
    <location>
        <begin position="81"/>
        <end position="83"/>
    </location>
    <ligand>
        <name>5-amino-6-(D-ribitylamino)uracil</name>
        <dbReference type="ChEBI" id="CHEBI:15934"/>
    </ligand>
</feature>
<feature type="binding site" evidence="1">
    <location>
        <begin position="86"/>
        <end position="87"/>
    </location>
    <ligand>
        <name>(2S)-2-hydroxy-3-oxobutyl phosphate</name>
        <dbReference type="ChEBI" id="CHEBI:58830"/>
    </ligand>
</feature>
<feature type="binding site" evidence="1">
    <location>
        <position position="114"/>
    </location>
    <ligand>
        <name>5-amino-6-(D-ribitylamino)uracil</name>
        <dbReference type="ChEBI" id="CHEBI:15934"/>
    </ligand>
</feature>
<feature type="binding site" evidence="1">
    <location>
        <position position="128"/>
    </location>
    <ligand>
        <name>(2S)-2-hydroxy-3-oxobutyl phosphate</name>
        <dbReference type="ChEBI" id="CHEBI:58830"/>
    </ligand>
</feature>
<proteinExistence type="inferred from homology"/>